<comment type="function">
    <text>Activation of RuBisCO (ribulose-1,5-bisphosphate carboxylase/oxygenase; EC 4.1.1.39) involves the ATP-dependent carboxylation of the epsilon-amino group of lysine leading to a carbamate structure.</text>
</comment>
<comment type="subcellular location">
    <subcellularLocation>
        <location>Plastid</location>
        <location>Chloroplast stroma</location>
    </subcellularLocation>
</comment>
<comment type="similarity">
    <text evidence="3">Belongs to the RuBisCO activase family.</text>
</comment>
<dbReference type="EMBL" id="X67674">
    <property type="protein sequence ID" value="CAA47906.1"/>
    <property type="molecule type" value="mRNA"/>
</dbReference>
<dbReference type="PIR" id="S28172">
    <property type="entry name" value="S28172"/>
</dbReference>
<dbReference type="SMR" id="Q01587"/>
<dbReference type="eggNOG" id="KOG0651">
    <property type="taxonomic scope" value="Eukaryota"/>
</dbReference>
<dbReference type="GO" id="GO:0009570">
    <property type="term" value="C:chloroplast stroma"/>
    <property type="evidence" value="ECO:0007669"/>
    <property type="project" value="UniProtKB-SubCell"/>
</dbReference>
<dbReference type="GO" id="GO:0005524">
    <property type="term" value="F:ATP binding"/>
    <property type="evidence" value="ECO:0007669"/>
    <property type="project" value="UniProtKB-KW"/>
</dbReference>
<dbReference type="GO" id="GO:0016887">
    <property type="term" value="F:ATP hydrolysis activity"/>
    <property type="evidence" value="ECO:0007669"/>
    <property type="project" value="InterPro"/>
</dbReference>
<dbReference type="FunFam" id="1.10.8.1070:FF:000001">
    <property type="entry name" value="Ribulose bisphosphate carboxylase/oxygenase activase, chloroplastic"/>
    <property type="match status" value="1"/>
</dbReference>
<dbReference type="FunFam" id="3.40.50.300:FF:000258">
    <property type="entry name" value="Ribulose bisphosphate carboxylase/oxygenase activase, chloroplastic"/>
    <property type="match status" value="1"/>
</dbReference>
<dbReference type="Gene3D" id="1.10.8.1070">
    <property type="match status" value="1"/>
</dbReference>
<dbReference type="Gene3D" id="3.40.50.300">
    <property type="entry name" value="P-loop containing nucleotide triphosphate hydrolases"/>
    <property type="match status" value="1"/>
</dbReference>
<dbReference type="InterPro" id="IPR003959">
    <property type="entry name" value="ATPase_AAA_core"/>
</dbReference>
<dbReference type="InterPro" id="IPR027417">
    <property type="entry name" value="P-loop_NTPase"/>
</dbReference>
<dbReference type="InterPro" id="IPR044960">
    <property type="entry name" value="RCA-like"/>
</dbReference>
<dbReference type="InterPro" id="IPR048571">
    <property type="entry name" value="RuBisCO_activase_AAA_helical"/>
</dbReference>
<dbReference type="PANTHER" id="PTHR32429">
    <property type="match status" value="1"/>
</dbReference>
<dbReference type="PANTHER" id="PTHR32429:SF44">
    <property type="entry name" value="RIBULOSE BISPHOSPHATE CARBOXYLASE_OXYGENASE ACTIVASE, CHLOROPLASTIC"/>
    <property type="match status" value="1"/>
</dbReference>
<dbReference type="Pfam" id="PF00004">
    <property type="entry name" value="AAA"/>
    <property type="match status" value="1"/>
</dbReference>
<dbReference type="Pfam" id="PF21228">
    <property type="entry name" value="RuBisCO_activase_AAA_helical"/>
    <property type="match status" value="1"/>
</dbReference>
<dbReference type="SUPFAM" id="SSF52540">
    <property type="entry name" value="P-loop containing nucleoside triphosphate hydrolases"/>
    <property type="match status" value="1"/>
</dbReference>
<evidence type="ECO:0000250" key="1"/>
<evidence type="ECO:0000255" key="2"/>
<evidence type="ECO:0000305" key="3"/>
<protein>
    <recommendedName>
        <fullName>Ribulose bisphosphate carboxylase/oxygenase activase, chloroplastic</fullName>
        <shortName>RA</shortName>
        <shortName>RuBisCO activase</shortName>
    </recommendedName>
</protein>
<name>RCA_CUCSA</name>
<organism>
    <name type="scientific">Cucumis sativus</name>
    <name type="common">Cucumber</name>
    <dbReference type="NCBI Taxonomy" id="3659"/>
    <lineage>
        <taxon>Eukaryota</taxon>
        <taxon>Viridiplantae</taxon>
        <taxon>Streptophyta</taxon>
        <taxon>Embryophyta</taxon>
        <taxon>Tracheophyta</taxon>
        <taxon>Spermatophyta</taxon>
        <taxon>Magnoliopsida</taxon>
        <taxon>eudicotyledons</taxon>
        <taxon>Gunneridae</taxon>
        <taxon>Pentapetalae</taxon>
        <taxon>rosids</taxon>
        <taxon>fabids</taxon>
        <taxon>Cucurbitales</taxon>
        <taxon>Cucurbitaceae</taxon>
        <taxon>Benincaseae</taxon>
        <taxon>Cucumis</taxon>
    </lineage>
</organism>
<sequence>MAATVSTIGAVNRTTLNNSNYGGLVPNSAFLGSRLKVSSRFTTSKMVTGNFKIVAEQDEEKQTEKDKWRGLAFDTSDDQQDITRGKGLADPLFQAPMGTGTHNAVLSSYEYISAGLRDYSYDNNVDGFYIAPAFMDKLTVHIVKNFLTLPNIKVPLILGVWGGKGQGKSFQCELVFAKMGINPIMMSAGELESGNAGEPAKLIRQRYREAADIIKKGKMCCLFINDLDAGAGRLGGTTQYTVNNQMVNATLMNIADNPTNVQLPGMYNKEENPRVPIIVTGNDFSTLYAPLIRDGRMDKFYWAPTREDRIGICTGIFRTDGVPFEDIVKLVDTFPGQSIDFFGALRARVYDDEVRKWAVGVGVERIGRNLVNSKESPPTFDQPKMTIEKLLEYGNMLVMEQENVKRVKLVTSI</sequence>
<feature type="transit peptide" description="Chloroplast" evidence="2">
    <location>
        <begin position="1"/>
        <end position="54"/>
    </location>
</feature>
<feature type="chain" id="PRO_0000030230" description="Ribulose bisphosphate carboxylase/oxygenase activase, chloroplastic">
    <location>
        <begin position="55"/>
        <end position="413"/>
    </location>
</feature>
<feature type="binding site" evidence="1">
    <location>
        <begin position="162"/>
        <end position="169"/>
    </location>
    <ligand>
        <name>ATP</name>
        <dbReference type="ChEBI" id="CHEBI:30616"/>
    </ligand>
</feature>
<proteinExistence type="evidence at transcript level"/>
<accession>Q01587</accession>
<reference key="1">
    <citation type="journal article" date="1992" name="Biochim. Biophys. Acta">
        <title>Sequence analysis of cucumber cotyledon ribulosebisphosphate carboxylase/oxygenase activase cDNA.</title>
        <authorList>
            <person name="Preisig-Mueller R."/>
            <person name="Kindl H."/>
        </authorList>
    </citation>
    <scope>NUCLEOTIDE SEQUENCE [MRNA]</scope>
    <source>
        <tissue>Cotyledon</tissue>
    </source>
</reference>
<keyword id="KW-0067">ATP-binding</keyword>
<keyword id="KW-0150">Chloroplast</keyword>
<keyword id="KW-0547">Nucleotide-binding</keyword>
<keyword id="KW-0934">Plastid</keyword>
<keyword id="KW-0809">Transit peptide</keyword>